<comment type="function">
    <text evidence="1">Non-essential, abundant cell division factor that is required for proper Z-ring formation. It is recruited early to the divisome by direct interaction with FtsZ, stimulating Z-ring assembly and thereby promoting cell division earlier in the cell cycle. Its recruitment to the Z-ring requires functional FtsA or ZipA.</text>
</comment>
<comment type="subunit">
    <text evidence="1">Homodimer. The ends of the coiled-coil dimer bind to each other, forming polymers. Interacts with FtsZ.</text>
</comment>
<comment type="subcellular location">
    <subcellularLocation>
        <location evidence="1">Cytoplasm</location>
    </subcellularLocation>
    <text evidence="1">Localizes to the septum at mid-cell, in a FtsZ-like pattern.</text>
</comment>
<comment type="similarity">
    <text evidence="1">Belongs to the ZapB family.</text>
</comment>
<feature type="chain" id="PRO_1000164520" description="Cell division protein ZapB">
    <location>
        <begin position="1"/>
        <end position="80"/>
    </location>
</feature>
<feature type="coiled-coil region" evidence="1">
    <location>
        <begin position="3"/>
        <end position="80"/>
    </location>
</feature>
<reference key="1">
    <citation type="journal article" date="2008" name="PLoS ONE">
        <title>A recalibrated molecular clock and independent origins for the cholera pandemic clones.</title>
        <authorList>
            <person name="Feng L."/>
            <person name="Reeves P.R."/>
            <person name="Lan R."/>
            <person name="Ren Y."/>
            <person name="Gao C."/>
            <person name="Zhou Z."/>
            <person name="Ren Y."/>
            <person name="Cheng J."/>
            <person name="Wang W."/>
            <person name="Wang J."/>
            <person name="Qian W."/>
            <person name="Li D."/>
            <person name="Wang L."/>
        </authorList>
    </citation>
    <scope>NUCLEOTIDE SEQUENCE [LARGE SCALE GENOMIC DNA]</scope>
    <source>
        <strain>M66-2</strain>
    </source>
</reference>
<evidence type="ECO:0000255" key="1">
    <source>
        <dbReference type="HAMAP-Rule" id="MF_01196"/>
    </source>
</evidence>
<protein>
    <recommendedName>
        <fullName evidence="1">Cell division protein ZapB</fullName>
    </recommendedName>
</protein>
<gene>
    <name evidence="1" type="primary">zapB</name>
    <name type="ordered locus">VCM66_2606</name>
</gene>
<name>ZAPB_VIBCM</name>
<dbReference type="EMBL" id="CP001233">
    <property type="protein sequence ID" value="ACP06902.1"/>
    <property type="molecule type" value="Genomic_DNA"/>
</dbReference>
<dbReference type="RefSeq" id="WP_000007388.1">
    <property type="nucleotide sequence ID" value="NC_012578.1"/>
</dbReference>
<dbReference type="SMR" id="C3LSB5"/>
<dbReference type="GeneID" id="94012668"/>
<dbReference type="KEGG" id="vcm:VCM66_2606"/>
<dbReference type="HOGENOM" id="CLU_171174_2_0_6"/>
<dbReference type="Proteomes" id="UP000001217">
    <property type="component" value="Chromosome I"/>
</dbReference>
<dbReference type="GO" id="GO:0005737">
    <property type="term" value="C:cytoplasm"/>
    <property type="evidence" value="ECO:0007669"/>
    <property type="project" value="UniProtKB-SubCell"/>
</dbReference>
<dbReference type="GO" id="GO:0000917">
    <property type="term" value="P:division septum assembly"/>
    <property type="evidence" value="ECO:0007669"/>
    <property type="project" value="UniProtKB-KW"/>
</dbReference>
<dbReference type="GO" id="GO:0043093">
    <property type="term" value="P:FtsZ-dependent cytokinesis"/>
    <property type="evidence" value="ECO:0007669"/>
    <property type="project" value="UniProtKB-UniRule"/>
</dbReference>
<dbReference type="Gene3D" id="1.20.5.340">
    <property type="match status" value="1"/>
</dbReference>
<dbReference type="HAMAP" id="MF_01196">
    <property type="entry name" value="ZapB"/>
    <property type="match status" value="1"/>
</dbReference>
<dbReference type="InterPro" id="IPR009252">
    <property type="entry name" value="Cell_div_ZapB"/>
</dbReference>
<dbReference type="Pfam" id="PF06005">
    <property type="entry name" value="ZapB"/>
    <property type="match status" value="1"/>
</dbReference>
<organism>
    <name type="scientific">Vibrio cholerae serotype O1 (strain M66-2)</name>
    <dbReference type="NCBI Taxonomy" id="579112"/>
    <lineage>
        <taxon>Bacteria</taxon>
        <taxon>Pseudomonadati</taxon>
        <taxon>Pseudomonadota</taxon>
        <taxon>Gammaproteobacteria</taxon>
        <taxon>Vibrionales</taxon>
        <taxon>Vibrionaceae</taxon>
        <taxon>Vibrio</taxon>
    </lineage>
</organism>
<sequence>MSFEVLEKLEAKIQTAVDTIALLQMEVEELKEEKQQLQNEAQELREAREALEQRAQQVQQEHAAWQERIRSLLGKMEDVE</sequence>
<accession>C3LSB5</accession>
<proteinExistence type="inferred from homology"/>
<keyword id="KW-0131">Cell cycle</keyword>
<keyword id="KW-0132">Cell division</keyword>
<keyword id="KW-0175">Coiled coil</keyword>
<keyword id="KW-0963">Cytoplasm</keyword>
<keyword id="KW-0717">Septation</keyword>